<organism>
    <name type="scientific">Staphylococcus epidermidis (strain ATCC 12228 / FDA PCI 1200)</name>
    <dbReference type="NCBI Taxonomy" id="176280"/>
    <lineage>
        <taxon>Bacteria</taxon>
        <taxon>Bacillati</taxon>
        <taxon>Bacillota</taxon>
        <taxon>Bacilli</taxon>
        <taxon>Bacillales</taxon>
        <taxon>Staphylococcaceae</taxon>
        <taxon>Staphylococcus</taxon>
    </lineage>
</organism>
<comment type="catalytic activity">
    <reaction evidence="1">
        <text>(S)-malate + a quinone = a quinol + oxaloacetate</text>
        <dbReference type="Rhea" id="RHEA:46012"/>
        <dbReference type="ChEBI" id="CHEBI:15589"/>
        <dbReference type="ChEBI" id="CHEBI:16452"/>
        <dbReference type="ChEBI" id="CHEBI:24646"/>
        <dbReference type="ChEBI" id="CHEBI:132124"/>
        <dbReference type="EC" id="1.1.5.4"/>
    </reaction>
</comment>
<comment type="cofactor">
    <cofactor evidence="1">
        <name>FAD</name>
        <dbReference type="ChEBI" id="CHEBI:57692"/>
    </cofactor>
</comment>
<comment type="pathway">
    <text evidence="1">Carbohydrate metabolism; tricarboxylic acid cycle; oxaloacetate from (S)-malate (quinone route): step 1/1.</text>
</comment>
<comment type="similarity">
    <text evidence="1">Belongs to the MQO family.</text>
</comment>
<accession>Q8CQ96</accession>
<name>MQO2_STAES</name>
<dbReference type="EC" id="1.1.5.4" evidence="1"/>
<dbReference type="EMBL" id="AE015929">
    <property type="protein sequence ID" value="AAO03863.1"/>
    <property type="molecule type" value="Genomic_DNA"/>
</dbReference>
<dbReference type="RefSeq" id="NP_763821.1">
    <property type="nucleotide sequence ID" value="NC_004461.1"/>
</dbReference>
<dbReference type="SMR" id="Q8CQ96"/>
<dbReference type="KEGG" id="sep:SE_0266"/>
<dbReference type="PATRIC" id="fig|176280.10.peg.243"/>
<dbReference type="eggNOG" id="COG0579">
    <property type="taxonomic scope" value="Bacteria"/>
</dbReference>
<dbReference type="HOGENOM" id="CLU_028151_0_0_9"/>
<dbReference type="OrthoDB" id="9763983at2"/>
<dbReference type="UniPathway" id="UPA00223">
    <property type="reaction ID" value="UER01008"/>
</dbReference>
<dbReference type="Proteomes" id="UP000001411">
    <property type="component" value="Chromosome"/>
</dbReference>
<dbReference type="GO" id="GO:0047545">
    <property type="term" value="F:2-hydroxyglutarate dehydrogenase activity"/>
    <property type="evidence" value="ECO:0007669"/>
    <property type="project" value="TreeGrafter"/>
</dbReference>
<dbReference type="GO" id="GO:0008924">
    <property type="term" value="F:L-malate dehydrogenase (quinone) activity"/>
    <property type="evidence" value="ECO:0007669"/>
    <property type="project" value="UniProtKB-UniRule"/>
</dbReference>
<dbReference type="GO" id="GO:0006099">
    <property type="term" value="P:tricarboxylic acid cycle"/>
    <property type="evidence" value="ECO:0007669"/>
    <property type="project" value="UniProtKB-UniRule"/>
</dbReference>
<dbReference type="Gene3D" id="3.30.9.10">
    <property type="entry name" value="D-Amino Acid Oxidase, subunit A, domain 2"/>
    <property type="match status" value="1"/>
</dbReference>
<dbReference type="Gene3D" id="3.50.50.60">
    <property type="entry name" value="FAD/NAD(P)-binding domain"/>
    <property type="match status" value="1"/>
</dbReference>
<dbReference type="HAMAP" id="MF_00212">
    <property type="entry name" value="MQO"/>
    <property type="match status" value="1"/>
</dbReference>
<dbReference type="InterPro" id="IPR036188">
    <property type="entry name" value="FAD/NAD-bd_sf"/>
</dbReference>
<dbReference type="InterPro" id="IPR006231">
    <property type="entry name" value="MQO"/>
</dbReference>
<dbReference type="NCBIfam" id="NF040844">
    <property type="entry name" value="Lac_Quin_Ox_NO"/>
    <property type="match status" value="1"/>
</dbReference>
<dbReference type="NCBIfam" id="TIGR01320">
    <property type="entry name" value="mal_quin_oxido"/>
    <property type="match status" value="1"/>
</dbReference>
<dbReference type="NCBIfam" id="NF003606">
    <property type="entry name" value="PRK05257.2-1"/>
    <property type="match status" value="1"/>
</dbReference>
<dbReference type="NCBIfam" id="NF003611">
    <property type="entry name" value="PRK05257.3-2"/>
    <property type="match status" value="1"/>
</dbReference>
<dbReference type="NCBIfam" id="NF009875">
    <property type="entry name" value="PRK13339.1"/>
    <property type="match status" value="1"/>
</dbReference>
<dbReference type="PANTHER" id="PTHR43104">
    <property type="entry name" value="L-2-HYDROXYGLUTARATE DEHYDROGENASE, MITOCHONDRIAL"/>
    <property type="match status" value="1"/>
</dbReference>
<dbReference type="PANTHER" id="PTHR43104:SF2">
    <property type="entry name" value="L-2-HYDROXYGLUTARATE DEHYDROGENASE, MITOCHONDRIAL"/>
    <property type="match status" value="1"/>
</dbReference>
<dbReference type="Pfam" id="PF06039">
    <property type="entry name" value="Mqo"/>
    <property type="match status" value="1"/>
</dbReference>
<dbReference type="SUPFAM" id="SSF51905">
    <property type="entry name" value="FAD/NAD(P)-binding domain"/>
    <property type="match status" value="1"/>
</dbReference>
<proteinExistence type="inferred from homology"/>
<protein>
    <recommendedName>
        <fullName evidence="1">Probable malate:quinone oxidoreductase 2</fullName>
        <ecNumber evidence="1">1.1.5.4</ecNumber>
    </recommendedName>
    <alternativeName>
        <fullName evidence="1">MQO 2</fullName>
    </alternativeName>
    <alternativeName>
        <fullName evidence="1">Malate dehydrogenase [quinone] 2</fullName>
    </alternativeName>
</protein>
<keyword id="KW-0274">FAD</keyword>
<keyword id="KW-0285">Flavoprotein</keyword>
<keyword id="KW-0560">Oxidoreductase</keyword>
<keyword id="KW-0816">Tricarboxylic acid cycle</keyword>
<gene>
    <name evidence="1" type="primary">mqo2</name>
    <name type="ordered locus">SE_0266</name>
</gene>
<sequence length="498" mass="56222">MANKESKNVVIIGAGVLSTTFGSMIKELEPDWNIKLYERLDRPGIESSNERNNAGTGHAALCELNYTVQQPDGSIDIEKAKEINEQFEISKQFWGHLVKSGNISNPRDFINPLPHISFVRGKNNVKFLKNRYEAMRNFPMFDNIEYTEDIEEMRKWMPLMMTGRTGNEIMAASKIDEGTDVNYGELTRKMAKSIEKHPNADVQYNHEVINFNRRKDGTWEVKVKNRNSGDVETVLADYVFIGAGGGAIPLLQKTGIPESKHLGGFPISGQFLICTNPDVINEHDVKVYGKEPPGTPPMTVPHLDTRYIEGERTLLFGPFANIGPKFLRNGSNLDLFKSVKPYNITTLLASAVKNLPLIKYSIDQVLMTKEGCMNHLRTFYPEARDEDWQLYTAGKRVQVIKDTKEHGKGFIQFGTEVVNSKDHSVIALLGESPGASTSVSVALEVLEKNFAEYEKDWTPKLQKMIPSYGKSLIDDVKLMRATRKQTSKDLELNYYESK</sequence>
<evidence type="ECO:0000255" key="1">
    <source>
        <dbReference type="HAMAP-Rule" id="MF_00212"/>
    </source>
</evidence>
<reference key="1">
    <citation type="journal article" date="2003" name="Mol. Microbiol.">
        <title>Genome-based analysis of virulence genes in a non-biofilm-forming Staphylococcus epidermidis strain (ATCC 12228).</title>
        <authorList>
            <person name="Zhang Y.-Q."/>
            <person name="Ren S.-X."/>
            <person name="Li H.-L."/>
            <person name="Wang Y.-X."/>
            <person name="Fu G."/>
            <person name="Yang J."/>
            <person name="Qin Z.-Q."/>
            <person name="Miao Y.-G."/>
            <person name="Wang W.-Y."/>
            <person name="Chen R.-S."/>
            <person name="Shen Y."/>
            <person name="Chen Z."/>
            <person name="Yuan Z.-H."/>
            <person name="Zhao G.-P."/>
            <person name="Qu D."/>
            <person name="Danchin A."/>
            <person name="Wen Y.-M."/>
        </authorList>
    </citation>
    <scope>NUCLEOTIDE SEQUENCE [LARGE SCALE GENOMIC DNA]</scope>
    <source>
        <strain>ATCC 12228 / FDA PCI 1200</strain>
    </source>
</reference>
<feature type="chain" id="PRO_0000128750" description="Probable malate:quinone oxidoreductase 2">
    <location>
        <begin position="1"/>
        <end position="498"/>
    </location>
</feature>